<reference key="1">
    <citation type="journal article" date="2008" name="J. Bacteriol.">
        <title>Complete genome sequence of uropathogenic Proteus mirabilis, a master of both adherence and motility.</title>
        <authorList>
            <person name="Pearson M.M."/>
            <person name="Sebaihia M."/>
            <person name="Churcher C."/>
            <person name="Quail M.A."/>
            <person name="Seshasayee A.S."/>
            <person name="Luscombe N.M."/>
            <person name="Abdellah Z."/>
            <person name="Arrosmith C."/>
            <person name="Atkin B."/>
            <person name="Chillingworth T."/>
            <person name="Hauser H."/>
            <person name="Jagels K."/>
            <person name="Moule S."/>
            <person name="Mungall K."/>
            <person name="Norbertczak H."/>
            <person name="Rabbinowitsch E."/>
            <person name="Walker D."/>
            <person name="Whithead S."/>
            <person name="Thomson N.R."/>
            <person name="Rather P.N."/>
            <person name="Parkhill J."/>
            <person name="Mobley H.L.T."/>
        </authorList>
    </citation>
    <scope>NUCLEOTIDE SEQUENCE [LARGE SCALE GENOMIC DNA]</scope>
    <source>
        <strain>HI4320</strain>
    </source>
</reference>
<gene>
    <name evidence="1" type="primary">rpsF</name>
    <name type="ordered locus">PMI3374</name>
</gene>
<sequence length="131" mass="15393">MRHYEIVFMVHPDQSEQVPGMIERYKTAITNANGQIHRLEDWGRRQLAYPINKLHKAHYVLMNVEAPQEVIDELETTFRFNDAVLRNMIMRTKHAVTEASPMVKAKDERRRDVAEDLDEEEVDDVAEDSEE</sequence>
<accession>B4F275</accession>
<protein>
    <recommendedName>
        <fullName evidence="1">Small ribosomal subunit protein bS6</fullName>
    </recommendedName>
    <alternativeName>
        <fullName evidence="3">30S ribosomal protein S6</fullName>
    </alternativeName>
</protein>
<dbReference type="EMBL" id="AM942759">
    <property type="protein sequence ID" value="CAR46616.1"/>
    <property type="molecule type" value="Genomic_DNA"/>
</dbReference>
<dbReference type="RefSeq" id="WP_004246283.1">
    <property type="nucleotide sequence ID" value="NC_010554.1"/>
</dbReference>
<dbReference type="SMR" id="B4F275"/>
<dbReference type="EnsemblBacteria" id="CAR46616">
    <property type="protein sequence ID" value="CAR46616"/>
    <property type="gene ID" value="PMI3374"/>
</dbReference>
<dbReference type="GeneID" id="6802427"/>
<dbReference type="KEGG" id="pmr:PMI3374"/>
<dbReference type="eggNOG" id="COG0360">
    <property type="taxonomic scope" value="Bacteria"/>
</dbReference>
<dbReference type="HOGENOM" id="CLU_113441_6_1_6"/>
<dbReference type="Proteomes" id="UP000008319">
    <property type="component" value="Chromosome"/>
</dbReference>
<dbReference type="GO" id="GO:0022627">
    <property type="term" value="C:cytosolic small ribosomal subunit"/>
    <property type="evidence" value="ECO:0007669"/>
    <property type="project" value="TreeGrafter"/>
</dbReference>
<dbReference type="GO" id="GO:0070181">
    <property type="term" value="F:small ribosomal subunit rRNA binding"/>
    <property type="evidence" value="ECO:0007669"/>
    <property type="project" value="TreeGrafter"/>
</dbReference>
<dbReference type="GO" id="GO:0003735">
    <property type="term" value="F:structural constituent of ribosome"/>
    <property type="evidence" value="ECO:0007669"/>
    <property type="project" value="InterPro"/>
</dbReference>
<dbReference type="GO" id="GO:0006412">
    <property type="term" value="P:translation"/>
    <property type="evidence" value="ECO:0007669"/>
    <property type="project" value="UniProtKB-UniRule"/>
</dbReference>
<dbReference type="CDD" id="cd00473">
    <property type="entry name" value="bS6"/>
    <property type="match status" value="1"/>
</dbReference>
<dbReference type="FunFam" id="3.30.70.60:FF:000003">
    <property type="entry name" value="30S ribosomal protein S6"/>
    <property type="match status" value="1"/>
</dbReference>
<dbReference type="Gene3D" id="3.30.70.60">
    <property type="match status" value="1"/>
</dbReference>
<dbReference type="HAMAP" id="MF_00360">
    <property type="entry name" value="Ribosomal_bS6"/>
    <property type="match status" value="1"/>
</dbReference>
<dbReference type="InterPro" id="IPR000529">
    <property type="entry name" value="Ribosomal_bS6"/>
</dbReference>
<dbReference type="InterPro" id="IPR020815">
    <property type="entry name" value="Ribosomal_bS6_CS"/>
</dbReference>
<dbReference type="InterPro" id="IPR035980">
    <property type="entry name" value="Ribosomal_bS6_sf"/>
</dbReference>
<dbReference type="InterPro" id="IPR020814">
    <property type="entry name" value="Ribosomal_S6_plastid/chlpt"/>
</dbReference>
<dbReference type="InterPro" id="IPR014717">
    <property type="entry name" value="Transl_elong_EF1B/ribsomal_bS6"/>
</dbReference>
<dbReference type="NCBIfam" id="TIGR00166">
    <property type="entry name" value="S6"/>
    <property type="match status" value="1"/>
</dbReference>
<dbReference type="PANTHER" id="PTHR21011">
    <property type="entry name" value="MITOCHONDRIAL 28S RIBOSOMAL PROTEIN S6"/>
    <property type="match status" value="1"/>
</dbReference>
<dbReference type="PANTHER" id="PTHR21011:SF1">
    <property type="entry name" value="SMALL RIBOSOMAL SUBUNIT PROTEIN BS6M"/>
    <property type="match status" value="1"/>
</dbReference>
<dbReference type="Pfam" id="PF01250">
    <property type="entry name" value="Ribosomal_S6"/>
    <property type="match status" value="1"/>
</dbReference>
<dbReference type="SUPFAM" id="SSF54995">
    <property type="entry name" value="Ribosomal protein S6"/>
    <property type="match status" value="1"/>
</dbReference>
<dbReference type="PROSITE" id="PS01048">
    <property type="entry name" value="RIBOSOMAL_S6"/>
    <property type="match status" value="1"/>
</dbReference>
<comment type="function">
    <text evidence="1">Binds together with bS18 to 16S ribosomal RNA.</text>
</comment>
<comment type="similarity">
    <text evidence="1">Belongs to the bacterial ribosomal protein bS6 family.</text>
</comment>
<name>RS6_PROMH</name>
<organism>
    <name type="scientific">Proteus mirabilis (strain HI4320)</name>
    <dbReference type="NCBI Taxonomy" id="529507"/>
    <lineage>
        <taxon>Bacteria</taxon>
        <taxon>Pseudomonadati</taxon>
        <taxon>Pseudomonadota</taxon>
        <taxon>Gammaproteobacteria</taxon>
        <taxon>Enterobacterales</taxon>
        <taxon>Morganellaceae</taxon>
        <taxon>Proteus</taxon>
    </lineage>
</organism>
<keyword id="KW-1185">Reference proteome</keyword>
<keyword id="KW-0687">Ribonucleoprotein</keyword>
<keyword id="KW-0689">Ribosomal protein</keyword>
<keyword id="KW-0694">RNA-binding</keyword>
<keyword id="KW-0699">rRNA-binding</keyword>
<proteinExistence type="inferred from homology"/>
<evidence type="ECO:0000255" key="1">
    <source>
        <dbReference type="HAMAP-Rule" id="MF_00360"/>
    </source>
</evidence>
<evidence type="ECO:0000256" key="2">
    <source>
        <dbReference type="SAM" id="MobiDB-lite"/>
    </source>
</evidence>
<evidence type="ECO:0000305" key="3"/>
<feature type="chain" id="PRO_1000120788" description="Small ribosomal subunit protein bS6">
    <location>
        <begin position="1"/>
        <end position="131"/>
    </location>
</feature>
<feature type="region of interest" description="Disordered" evidence="2">
    <location>
        <begin position="97"/>
        <end position="131"/>
    </location>
</feature>
<feature type="compositionally biased region" description="Basic and acidic residues" evidence="2">
    <location>
        <begin position="104"/>
        <end position="114"/>
    </location>
</feature>
<feature type="compositionally biased region" description="Acidic residues" evidence="2">
    <location>
        <begin position="115"/>
        <end position="131"/>
    </location>
</feature>